<gene>
    <name type="primary">sodC</name>
    <name type="ordered locus">BMEII0581</name>
</gene>
<feature type="signal peptide" evidence="2">
    <location>
        <begin position="1"/>
        <end position="20"/>
    </location>
</feature>
<feature type="chain" id="PRO_0000032821" description="Superoxide dismutase [Cu-Zn]">
    <location>
        <begin position="21"/>
        <end position="174"/>
    </location>
</feature>
<feature type="binding site" evidence="1">
    <location>
        <position position="68"/>
    </location>
    <ligand>
        <name>Cu cation</name>
        <dbReference type="ChEBI" id="CHEBI:23378"/>
        <note>catalytic</note>
    </ligand>
</feature>
<feature type="binding site" evidence="1">
    <location>
        <position position="70"/>
    </location>
    <ligand>
        <name>Cu cation</name>
        <dbReference type="ChEBI" id="CHEBI:23378"/>
        <note>catalytic</note>
    </ligand>
</feature>
<feature type="binding site" evidence="1">
    <location>
        <position position="93"/>
    </location>
    <ligand>
        <name>Cu cation</name>
        <dbReference type="ChEBI" id="CHEBI:23378"/>
        <note>catalytic</note>
    </ligand>
</feature>
<feature type="binding site" evidence="1">
    <location>
        <position position="93"/>
    </location>
    <ligand>
        <name>Zn(2+)</name>
        <dbReference type="ChEBI" id="CHEBI:29105"/>
        <note>structural</note>
    </ligand>
</feature>
<feature type="binding site" evidence="1">
    <location>
        <position position="102"/>
    </location>
    <ligand>
        <name>Zn(2+)</name>
        <dbReference type="ChEBI" id="CHEBI:29105"/>
        <note>structural</note>
    </ligand>
</feature>
<feature type="binding site" evidence="1">
    <location>
        <position position="110"/>
    </location>
    <ligand>
        <name>Zn(2+)</name>
        <dbReference type="ChEBI" id="CHEBI:29105"/>
        <note>structural</note>
    </ligand>
</feature>
<feature type="binding site" evidence="1">
    <location>
        <position position="113"/>
    </location>
    <ligand>
        <name>Zn(2+)</name>
        <dbReference type="ChEBI" id="CHEBI:29105"/>
        <note>structural</note>
    </ligand>
</feature>
<feature type="binding site" evidence="1">
    <location>
        <position position="148"/>
    </location>
    <ligand>
        <name>Cu cation</name>
        <dbReference type="ChEBI" id="CHEBI:23378"/>
        <note>catalytic</note>
    </ligand>
</feature>
<feature type="disulfide bond" evidence="1">
    <location>
        <begin position="75"/>
        <end position="170"/>
    </location>
</feature>
<keyword id="KW-0049">Antioxidant</keyword>
<keyword id="KW-0186">Copper</keyword>
<keyword id="KW-1015">Disulfide bond</keyword>
<keyword id="KW-0479">Metal-binding</keyword>
<keyword id="KW-0560">Oxidoreductase</keyword>
<keyword id="KW-0574">Periplasm</keyword>
<keyword id="KW-0732">Signal</keyword>
<keyword id="KW-0862">Zinc</keyword>
<comment type="function">
    <text evidence="1">Destroys radicals which are normally produced within the cells and which are toxic to biological systems.</text>
</comment>
<comment type="catalytic activity">
    <reaction>
        <text>2 superoxide + 2 H(+) = H2O2 + O2</text>
        <dbReference type="Rhea" id="RHEA:20696"/>
        <dbReference type="ChEBI" id="CHEBI:15378"/>
        <dbReference type="ChEBI" id="CHEBI:15379"/>
        <dbReference type="ChEBI" id="CHEBI:16240"/>
        <dbReference type="ChEBI" id="CHEBI:18421"/>
        <dbReference type="EC" id="1.15.1.1"/>
    </reaction>
</comment>
<comment type="cofactor">
    <cofactor evidence="1">
        <name>Cu cation</name>
        <dbReference type="ChEBI" id="CHEBI:23378"/>
    </cofactor>
    <text evidence="1">Binds 1 copper ion per subunit.</text>
</comment>
<comment type="cofactor">
    <cofactor evidence="1">
        <name>Zn(2+)</name>
        <dbReference type="ChEBI" id="CHEBI:29105"/>
    </cofactor>
    <text evidence="1">Binds 1 zinc ion per subunit.</text>
</comment>
<comment type="subunit">
    <text evidence="1">Homodimer.</text>
</comment>
<comment type="subcellular location">
    <subcellularLocation>
        <location evidence="1">Periplasm</location>
    </subcellularLocation>
</comment>
<comment type="similarity">
    <text evidence="3">Belongs to the Cu-Zn superoxide dismutase family.</text>
</comment>
<sequence length="174" mass="18262">MMKSLFIASTMVLMAFPAFAESTTVKMYEALPTGPGKEVGTVVISEAPGGLHFKVNMEKLTPGYHGFHVHENPSCAPGEKDGKIVPALAAGGHYDPGNTHHHLGPEGDGHMGDLPRLSANADGKVSETVVAPHLKKLAEIKQRSLMVHVGGDNYSDKPEPLGGGGARFACGVIE</sequence>
<reference key="1">
    <citation type="journal article" date="2002" name="Proc. Natl. Acad. Sci. U.S.A.">
        <title>The genome sequence of the facultative intracellular pathogen Brucella melitensis.</title>
        <authorList>
            <person name="DelVecchio V.G."/>
            <person name="Kapatral V."/>
            <person name="Redkar R.J."/>
            <person name="Patra G."/>
            <person name="Mujer C."/>
            <person name="Los T."/>
            <person name="Ivanova N."/>
            <person name="Anderson I."/>
            <person name="Bhattacharyya A."/>
            <person name="Lykidis A."/>
            <person name="Reznik G."/>
            <person name="Jablonski L."/>
            <person name="Larsen N."/>
            <person name="D'Souza M."/>
            <person name="Bernal A."/>
            <person name="Mazur M."/>
            <person name="Goltsman E."/>
            <person name="Selkov E."/>
            <person name="Elzer P.H."/>
            <person name="Hagius S."/>
            <person name="O'Callaghan D."/>
            <person name="Letesson J.-J."/>
            <person name="Haselkorn R."/>
            <person name="Kyrpides N.C."/>
            <person name="Overbeek R."/>
        </authorList>
    </citation>
    <scope>NUCLEOTIDE SEQUENCE [LARGE SCALE GENOMIC DNA]</scope>
    <source>
        <strain>ATCC 23456 / CCUG 17765 / NCTC 10094 / 16M</strain>
    </source>
</reference>
<name>SODC_BRUME</name>
<organism>
    <name type="scientific">Brucella melitensis biotype 1 (strain ATCC 23456 / CCUG 17765 / NCTC 10094 / 16M)</name>
    <dbReference type="NCBI Taxonomy" id="224914"/>
    <lineage>
        <taxon>Bacteria</taxon>
        <taxon>Pseudomonadati</taxon>
        <taxon>Pseudomonadota</taxon>
        <taxon>Alphaproteobacteria</taxon>
        <taxon>Hyphomicrobiales</taxon>
        <taxon>Brucellaceae</taxon>
        <taxon>Brucella/Ochrobactrum group</taxon>
        <taxon>Brucella</taxon>
    </lineage>
</organism>
<evidence type="ECO:0000250" key="1"/>
<evidence type="ECO:0000255" key="2"/>
<evidence type="ECO:0000305" key="3"/>
<dbReference type="EC" id="1.15.1.1"/>
<dbReference type="EMBL" id="AE008918">
    <property type="protein sequence ID" value="AAL53823.1"/>
    <property type="molecule type" value="Genomic_DNA"/>
</dbReference>
<dbReference type="PIR" id="AD3582">
    <property type="entry name" value="AD3582"/>
</dbReference>
<dbReference type="SMR" id="P66826"/>
<dbReference type="KEGG" id="bme:BMEII0581"/>
<dbReference type="eggNOG" id="COG2032">
    <property type="taxonomic scope" value="Bacteria"/>
</dbReference>
<dbReference type="Proteomes" id="UP000000419">
    <property type="component" value="Chromosome II"/>
</dbReference>
<dbReference type="GO" id="GO:0042597">
    <property type="term" value="C:periplasmic space"/>
    <property type="evidence" value="ECO:0007669"/>
    <property type="project" value="UniProtKB-SubCell"/>
</dbReference>
<dbReference type="GO" id="GO:0005507">
    <property type="term" value="F:copper ion binding"/>
    <property type="evidence" value="ECO:0007669"/>
    <property type="project" value="InterPro"/>
</dbReference>
<dbReference type="GO" id="GO:0004784">
    <property type="term" value="F:superoxide dismutase activity"/>
    <property type="evidence" value="ECO:0007669"/>
    <property type="project" value="UniProtKB-EC"/>
</dbReference>
<dbReference type="CDD" id="cd00305">
    <property type="entry name" value="Cu-Zn_Superoxide_Dismutase"/>
    <property type="match status" value="1"/>
</dbReference>
<dbReference type="Gene3D" id="2.60.40.200">
    <property type="entry name" value="Superoxide dismutase, copper/zinc binding domain"/>
    <property type="match status" value="1"/>
</dbReference>
<dbReference type="InterPro" id="IPR036423">
    <property type="entry name" value="SOD-like_Cu/Zn_dom_sf"/>
</dbReference>
<dbReference type="InterPro" id="IPR024134">
    <property type="entry name" value="SOD_Cu/Zn_/chaperone"/>
</dbReference>
<dbReference type="InterPro" id="IPR018152">
    <property type="entry name" value="SOD_Cu/Zn_BS"/>
</dbReference>
<dbReference type="InterPro" id="IPR001424">
    <property type="entry name" value="SOD_Cu_Zn_dom"/>
</dbReference>
<dbReference type="NCBIfam" id="NF007628">
    <property type="entry name" value="PRK10290.1"/>
    <property type="match status" value="1"/>
</dbReference>
<dbReference type="PANTHER" id="PTHR10003">
    <property type="entry name" value="SUPEROXIDE DISMUTASE CU-ZN -RELATED"/>
    <property type="match status" value="1"/>
</dbReference>
<dbReference type="Pfam" id="PF00080">
    <property type="entry name" value="Sod_Cu"/>
    <property type="match status" value="1"/>
</dbReference>
<dbReference type="SUPFAM" id="SSF49329">
    <property type="entry name" value="Cu,Zn superoxide dismutase-like"/>
    <property type="match status" value="1"/>
</dbReference>
<dbReference type="PROSITE" id="PS00087">
    <property type="entry name" value="SOD_CU_ZN_1"/>
    <property type="match status" value="1"/>
</dbReference>
<dbReference type="PROSITE" id="PS00332">
    <property type="entry name" value="SOD_CU_ZN_2"/>
    <property type="match status" value="1"/>
</dbReference>
<proteinExistence type="inferred from homology"/>
<protein>
    <recommendedName>
        <fullName>Superoxide dismutase [Cu-Zn]</fullName>
        <ecNumber>1.15.1.1</ecNumber>
    </recommendedName>
</protein>
<accession>P66826</accession>
<accession>P58645</accession>